<organism>
    <name type="scientific">Photorhabdus laumondii subsp. laumondii (strain DSM 15139 / CIP 105565 / TT01)</name>
    <name type="common">Photorhabdus luminescens subsp. laumondii</name>
    <dbReference type="NCBI Taxonomy" id="243265"/>
    <lineage>
        <taxon>Bacteria</taxon>
        <taxon>Pseudomonadati</taxon>
        <taxon>Pseudomonadota</taxon>
        <taxon>Gammaproteobacteria</taxon>
        <taxon>Enterobacterales</taxon>
        <taxon>Morganellaceae</taxon>
        <taxon>Photorhabdus</taxon>
    </lineage>
</organism>
<gene>
    <name evidence="1" type="primary">rnfG</name>
    <name type="ordered locus">plu2381</name>
</gene>
<evidence type="ECO:0000255" key="1">
    <source>
        <dbReference type="HAMAP-Rule" id="MF_00479"/>
    </source>
</evidence>
<name>RNFG_PHOLL</name>
<proteinExistence type="inferred from homology"/>
<protein>
    <recommendedName>
        <fullName evidence="1">Ion-translocating oxidoreductase complex subunit G</fullName>
        <ecNumber evidence="1">7.-.-.-</ecNumber>
    </recommendedName>
    <alternativeName>
        <fullName evidence="1">Rnf electron transport complex subunit G</fullName>
    </alternativeName>
</protein>
<dbReference type="EC" id="7.-.-.-" evidence="1"/>
<dbReference type="EMBL" id="BX571867">
    <property type="protein sequence ID" value="CAE14701.1"/>
    <property type="molecule type" value="Genomic_DNA"/>
</dbReference>
<dbReference type="RefSeq" id="WP_011146616.1">
    <property type="nucleotide sequence ID" value="NC_005126.1"/>
</dbReference>
<dbReference type="SMR" id="Q7N4F7"/>
<dbReference type="STRING" id="243265.plu2381"/>
<dbReference type="GeneID" id="48848651"/>
<dbReference type="KEGG" id="plu:plu2381"/>
<dbReference type="eggNOG" id="COG4659">
    <property type="taxonomic scope" value="Bacteria"/>
</dbReference>
<dbReference type="HOGENOM" id="CLU_077882_1_0_6"/>
<dbReference type="OrthoDB" id="9784165at2"/>
<dbReference type="Proteomes" id="UP000002514">
    <property type="component" value="Chromosome"/>
</dbReference>
<dbReference type="GO" id="GO:0005886">
    <property type="term" value="C:plasma membrane"/>
    <property type="evidence" value="ECO:0007669"/>
    <property type="project" value="UniProtKB-SubCell"/>
</dbReference>
<dbReference type="GO" id="GO:0009055">
    <property type="term" value="F:electron transfer activity"/>
    <property type="evidence" value="ECO:0007669"/>
    <property type="project" value="InterPro"/>
</dbReference>
<dbReference type="GO" id="GO:0010181">
    <property type="term" value="F:FMN binding"/>
    <property type="evidence" value="ECO:0007669"/>
    <property type="project" value="InterPro"/>
</dbReference>
<dbReference type="GO" id="GO:0022900">
    <property type="term" value="P:electron transport chain"/>
    <property type="evidence" value="ECO:0007669"/>
    <property type="project" value="UniProtKB-UniRule"/>
</dbReference>
<dbReference type="HAMAP" id="MF_00479">
    <property type="entry name" value="RsxG_RnfG"/>
    <property type="match status" value="1"/>
</dbReference>
<dbReference type="InterPro" id="IPR007329">
    <property type="entry name" value="FMN-bd"/>
</dbReference>
<dbReference type="InterPro" id="IPR010209">
    <property type="entry name" value="Ion_transpt_RnfG/RsxG"/>
</dbReference>
<dbReference type="NCBIfam" id="NF002519">
    <property type="entry name" value="PRK01908.1"/>
    <property type="match status" value="1"/>
</dbReference>
<dbReference type="NCBIfam" id="TIGR01947">
    <property type="entry name" value="rnfG"/>
    <property type="match status" value="1"/>
</dbReference>
<dbReference type="PANTHER" id="PTHR36118">
    <property type="entry name" value="ION-TRANSLOCATING OXIDOREDUCTASE COMPLEX SUBUNIT G"/>
    <property type="match status" value="1"/>
</dbReference>
<dbReference type="PANTHER" id="PTHR36118:SF1">
    <property type="entry name" value="ION-TRANSLOCATING OXIDOREDUCTASE COMPLEX SUBUNIT G"/>
    <property type="match status" value="1"/>
</dbReference>
<dbReference type="Pfam" id="PF04205">
    <property type="entry name" value="FMN_bind"/>
    <property type="match status" value="1"/>
</dbReference>
<dbReference type="PIRSF" id="PIRSF006091">
    <property type="entry name" value="E_trnsport_RnfG"/>
    <property type="match status" value="1"/>
</dbReference>
<dbReference type="SMART" id="SM00900">
    <property type="entry name" value="FMN_bind"/>
    <property type="match status" value="1"/>
</dbReference>
<reference key="1">
    <citation type="journal article" date="2003" name="Nat. Biotechnol.">
        <title>The genome sequence of the entomopathogenic bacterium Photorhabdus luminescens.</title>
        <authorList>
            <person name="Duchaud E."/>
            <person name="Rusniok C."/>
            <person name="Frangeul L."/>
            <person name="Buchrieser C."/>
            <person name="Givaudan A."/>
            <person name="Taourit S."/>
            <person name="Bocs S."/>
            <person name="Boursaux-Eude C."/>
            <person name="Chandler M."/>
            <person name="Charles J.-F."/>
            <person name="Dassa E."/>
            <person name="Derose R."/>
            <person name="Derzelle S."/>
            <person name="Freyssinet G."/>
            <person name="Gaudriault S."/>
            <person name="Medigue C."/>
            <person name="Lanois A."/>
            <person name="Powell K."/>
            <person name="Siguier P."/>
            <person name="Vincent R."/>
            <person name="Wingate V."/>
            <person name="Zouine M."/>
            <person name="Glaser P."/>
            <person name="Boemare N."/>
            <person name="Danchin A."/>
            <person name="Kunst F."/>
        </authorList>
    </citation>
    <scope>NUCLEOTIDE SEQUENCE [LARGE SCALE GENOMIC DNA]</scope>
    <source>
        <strain>DSM 15139 / CIP 105565 / TT01</strain>
    </source>
</reference>
<comment type="function">
    <text evidence="1">Part of a membrane-bound complex that couples electron transfer with translocation of ions across the membrane.</text>
</comment>
<comment type="cofactor">
    <cofactor evidence="1">
        <name>FMN</name>
        <dbReference type="ChEBI" id="CHEBI:58210"/>
    </cofactor>
</comment>
<comment type="subunit">
    <text evidence="1">The complex is composed of six subunits: RnfA, RnfB, RnfC, RnfD, RnfE and RnfG.</text>
</comment>
<comment type="subcellular location">
    <subcellularLocation>
        <location evidence="1">Cell inner membrane</location>
        <topology evidence="1">Single-pass membrane protein</topology>
    </subcellularLocation>
</comment>
<comment type="similarity">
    <text evidence="1">Belongs to the RnfG family.</text>
</comment>
<feature type="chain" id="PRO_1000014122" description="Ion-translocating oxidoreductase complex subunit G">
    <location>
        <begin position="1"/>
        <end position="209"/>
    </location>
</feature>
<feature type="transmembrane region" description="Helical" evidence="1">
    <location>
        <begin position="9"/>
        <end position="29"/>
    </location>
</feature>
<feature type="modified residue" description="FMN phosphoryl threonine" evidence="1">
    <location>
        <position position="175"/>
    </location>
</feature>
<keyword id="KW-0997">Cell inner membrane</keyword>
<keyword id="KW-1003">Cell membrane</keyword>
<keyword id="KW-0249">Electron transport</keyword>
<keyword id="KW-0285">Flavoprotein</keyword>
<keyword id="KW-0288">FMN</keyword>
<keyword id="KW-0472">Membrane</keyword>
<keyword id="KW-0597">Phosphoprotein</keyword>
<keyword id="KW-1185">Reference proteome</keyword>
<keyword id="KW-1278">Translocase</keyword>
<keyword id="KW-0812">Transmembrane</keyword>
<keyword id="KW-1133">Transmembrane helix</keyword>
<keyword id="KW-0813">Transport</keyword>
<accession>Q7N4F7</accession>
<sequence length="209" mass="22597">MLETMRRHGITLAIFAALTTGLTAVVNSLTKSTIAEQAALQHKSLLDQVIPPALYDNDIQNECYLVNANALGNNLPHRLYLARKNGHPVAAALESTAPDGYSGAIQLLVGADFSGKVLGVRVTEHHETPGLGDKIETRISNWINVFSGKTITSNHDQHWAVKKDGGEFDQFTGATITPRAVVNSVKRTALYLQTIPEHLSSLESCGEKS</sequence>